<accession>P27649</accession>
<accession>Q52829</accession>
<gene>
    <name type="primary">hupD</name>
</gene>
<dbReference type="EMBL" id="X52974">
    <property type="protein sequence ID" value="CAA37151.1"/>
    <property type="molecule type" value="Genomic_DNA"/>
</dbReference>
<dbReference type="EMBL" id="Z36981">
    <property type="protein sequence ID" value="CAA85433.1"/>
    <property type="molecule type" value="Genomic_DNA"/>
</dbReference>
<dbReference type="PIR" id="B41892">
    <property type="entry name" value="B41892"/>
</dbReference>
<dbReference type="RefSeq" id="WP_018517048.1">
    <property type="nucleotide sequence ID" value="NZ_WIDS01000001.1"/>
</dbReference>
<dbReference type="SMR" id="P27649"/>
<dbReference type="MEROPS" id="A31.002"/>
<dbReference type="GO" id="GO:0004190">
    <property type="term" value="F:aspartic-type endopeptidase activity"/>
    <property type="evidence" value="ECO:0007669"/>
    <property type="project" value="UniProtKB-KW"/>
</dbReference>
<dbReference type="GO" id="GO:0008047">
    <property type="term" value="F:enzyme activator activity"/>
    <property type="evidence" value="ECO:0007669"/>
    <property type="project" value="InterPro"/>
</dbReference>
<dbReference type="GO" id="GO:0046872">
    <property type="term" value="F:metal ion binding"/>
    <property type="evidence" value="ECO:0007669"/>
    <property type="project" value="UniProtKB-KW"/>
</dbReference>
<dbReference type="GO" id="GO:0016485">
    <property type="term" value="P:protein processing"/>
    <property type="evidence" value="ECO:0007669"/>
    <property type="project" value="InterPro"/>
</dbReference>
<dbReference type="CDD" id="cd06062">
    <property type="entry name" value="H2MP_MemB-H2up"/>
    <property type="match status" value="1"/>
</dbReference>
<dbReference type="FunFam" id="3.40.50.1450:FF:000002">
    <property type="entry name" value="Hydrogenase 1 maturation protease"/>
    <property type="match status" value="1"/>
</dbReference>
<dbReference type="Gene3D" id="3.40.50.1450">
    <property type="entry name" value="HybD-like"/>
    <property type="match status" value="1"/>
</dbReference>
<dbReference type="InterPro" id="IPR004419">
    <property type="entry name" value="Pept_A31_hyd_express"/>
</dbReference>
<dbReference type="InterPro" id="IPR023430">
    <property type="entry name" value="Pept_HybD-like_dom_sf"/>
</dbReference>
<dbReference type="InterPro" id="IPR000671">
    <property type="entry name" value="Peptidase_A31"/>
</dbReference>
<dbReference type="NCBIfam" id="TIGR00140">
    <property type="entry name" value="hupD"/>
    <property type="match status" value="1"/>
</dbReference>
<dbReference type="NCBIfam" id="TIGR00072">
    <property type="entry name" value="hydrog_prot"/>
    <property type="match status" value="1"/>
</dbReference>
<dbReference type="PANTHER" id="PTHR30302">
    <property type="entry name" value="HYDROGENASE 1 MATURATION PROTEASE"/>
    <property type="match status" value="1"/>
</dbReference>
<dbReference type="PANTHER" id="PTHR30302:SF1">
    <property type="entry name" value="HYDROGENASE 2 MATURATION PROTEASE"/>
    <property type="match status" value="1"/>
</dbReference>
<dbReference type="Pfam" id="PF01750">
    <property type="entry name" value="HycI"/>
    <property type="match status" value="1"/>
</dbReference>
<dbReference type="PRINTS" id="PR00446">
    <property type="entry name" value="HYDRGNUPTAKE"/>
</dbReference>
<dbReference type="SUPFAM" id="SSF53163">
    <property type="entry name" value="HybD-like"/>
    <property type="match status" value="1"/>
</dbReference>
<sequence length="202" mass="22089">MTIPYPLGPPPAPRILVLGIGNILWADEGFGVRAVEAFHKAYELSDNVTILDGGTQGLYLVQFVNEHDRLIVFDAIDYGLEPGTMKVVEDDEVPKFTGAKKMSLHQTGFQEVLSAADFMGHYPERLTLIGCQPLDLEDWGGPLTAPVRGVIPAAIETAVRVLRSWGVAVTARPEGAAVPPLLEHDIDFERYERRAEPAALNC</sequence>
<organism>
    <name type="scientific">Rhizobium leguminosarum bv. viciae</name>
    <dbReference type="NCBI Taxonomy" id="387"/>
    <lineage>
        <taxon>Bacteria</taxon>
        <taxon>Pseudomonadati</taxon>
        <taxon>Pseudomonadota</taxon>
        <taxon>Alphaproteobacteria</taxon>
        <taxon>Hyphomicrobiales</taxon>
        <taxon>Rhizobiaceae</taxon>
        <taxon>Rhizobium/Agrobacterium group</taxon>
        <taxon>Rhizobium</taxon>
    </lineage>
</organism>
<reference key="1">
    <citation type="journal article" date="1992" name="J. Bacteriol.">
        <title>Nucleotide sequence and characterization of four additional genes of the hydrogenase structural operon from Rhizobium leguminosarum bv. viciae.</title>
        <authorList>
            <person name="Hidalgo E."/>
            <person name="Palacios J.M."/>
            <person name="Murillo J."/>
            <person name="Ruiz-Argueso T."/>
        </authorList>
    </citation>
    <scope>NUCLEOTIDE SEQUENCE [GENOMIC DNA]</scope>
    <source>
        <strain>UPM791</strain>
    </source>
</reference>
<reference key="2">
    <citation type="journal article" date="1997" name="Mol. Plant Microbe Interact.">
        <title>Organization of the hup-region and its differential transcription in non-symbiotic and symbiotic cells of Rhizobium leguminosarum bv. viciae B10.</title>
        <authorList>
            <person name="Brito B."/>
            <person name="Palacios J.M."/>
            <person name="Imperial J."/>
            <person name="Ruiz-Argueso T."/>
            <person name="Yang W.C."/>
            <person name="Bisseling T."/>
            <person name="Schmitt H."/>
            <person name="Kerl V."/>
            <person name="Bauer T."/>
            <person name="Kokotek W."/>
            <person name="Lotz W."/>
        </authorList>
    </citation>
    <scope>NUCLEOTIDE SEQUENCE [GENOMIC DNA]</scope>
    <source>
        <strain>B10</strain>
    </source>
</reference>
<protein>
    <recommendedName>
        <fullName>Hydrogenase expression/formation protein HupD</fullName>
    </recommendedName>
</protein>
<proteinExistence type="inferred from homology"/>
<comment type="function">
    <text>Not known. Could be involved in the processing of hydrogenase.</text>
</comment>
<comment type="similarity">
    <text evidence="2">Belongs to the peptidase A31 family.</text>
</comment>
<keyword id="KW-0064">Aspartyl protease</keyword>
<keyword id="KW-0378">Hydrolase</keyword>
<keyword id="KW-0479">Metal-binding</keyword>
<keyword id="KW-0533">Nickel</keyword>
<keyword id="KW-0645">Protease</keyword>
<name>HUPD_RHILV</name>
<feature type="chain" id="PRO_0000201939" description="Hydrogenase expression/formation protein HupD">
    <location>
        <begin position="1"/>
        <end position="202"/>
    </location>
</feature>
<feature type="binding site" evidence="1">
    <location>
        <position position="28"/>
    </location>
    <ligand>
        <name>Ni(2+)</name>
        <dbReference type="ChEBI" id="CHEBI:49786"/>
    </ligand>
</feature>
<feature type="binding site" evidence="1">
    <location>
        <position position="74"/>
    </location>
    <ligand>
        <name>Ni(2+)</name>
        <dbReference type="ChEBI" id="CHEBI:49786"/>
    </ligand>
</feature>
<feature type="binding site" evidence="1">
    <location>
        <position position="105"/>
    </location>
    <ligand>
        <name>Ni(2+)</name>
        <dbReference type="ChEBI" id="CHEBI:49786"/>
    </ligand>
</feature>
<feature type="sequence conflict" description="In Ref. 1; CAA37151." evidence="2" ref="1">
    <original>V</original>
    <variation>G</variation>
    <location>
        <position position="72"/>
    </location>
</feature>
<evidence type="ECO:0000250" key="1"/>
<evidence type="ECO:0000305" key="2"/>